<evidence type="ECO:0000250" key="1">
    <source>
        <dbReference type="UniProtKB" id="P0A114"/>
    </source>
</evidence>
<evidence type="ECO:0000269" key="2">
    <source>
    </source>
</evidence>
<evidence type="ECO:0000303" key="3">
    <source>
    </source>
</evidence>
<evidence type="ECO:0000305" key="4"/>
<evidence type="ECO:0000305" key="5">
    <source>
    </source>
</evidence>
<accession>A0A2V5GSC6</accession>
<accession>A0A7M4B3V2</accession>
<protein>
    <recommendedName>
        <fullName evidence="3">Hydrolase pyvD</fullName>
        <ecNumber evidence="5">3.1.1.-</ecNumber>
    </recommendedName>
    <alternativeName>
        <fullName evidence="3">Pyranoviolin A biosynthesis cluster protein D</fullName>
    </alternativeName>
</protein>
<proteinExistence type="inferred from homology"/>
<keyword id="KW-0378">Hydrolase</keyword>
<keyword id="KW-1185">Reference proteome</keyword>
<organism>
    <name type="scientific">Aspergillus violaceofuscus (strain CBS 115571)</name>
    <dbReference type="NCBI Taxonomy" id="1450538"/>
    <lineage>
        <taxon>Eukaryota</taxon>
        <taxon>Fungi</taxon>
        <taxon>Dikarya</taxon>
        <taxon>Ascomycota</taxon>
        <taxon>Pezizomycotina</taxon>
        <taxon>Eurotiomycetes</taxon>
        <taxon>Eurotiomycetidae</taxon>
        <taxon>Eurotiales</taxon>
        <taxon>Aspergillaceae</taxon>
        <taxon>Aspergillus</taxon>
    </lineage>
</organism>
<reference key="1">
    <citation type="journal article" date="2020" name="Front. Microbiol.">
        <title>Discovery of pyranoviolin A and its biosynthetic gene cluster in Aspergillus violaceofuscus.</title>
        <authorList>
            <person name="Wei X."/>
            <person name="Chen L."/>
            <person name="Tang J.W."/>
            <person name="Matsuda Y."/>
        </authorList>
    </citation>
    <scope>NUCLEOTIDE SEQUENCE [GENOMIC DNA]</scope>
    <scope>FUNCTION</scope>
    <scope>PATHWAY</scope>
</reference>
<reference key="2">
    <citation type="submission" date="2018-02" db="EMBL/GenBank/DDBJ databases">
        <title>The genomes of Aspergillus section Nigri reveals drivers in fungal speciation.</title>
        <authorList>
            <consortium name="DOE Joint Genome Institute"/>
            <person name="Vesth T.C."/>
            <person name="Nybo J."/>
            <person name="Theobald S."/>
            <person name="Brandl J."/>
            <person name="Frisvad J.C."/>
            <person name="Nielsen K.F."/>
            <person name="Lyhne E.K."/>
            <person name="Kogle M.E."/>
            <person name="Kuo A."/>
            <person name="Riley R."/>
            <person name="Clum A."/>
            <person name="Nolan M."/>
            <person name="Lipzen A."/>
            <person name="Salamov A."/>
            <person name="Henrissat B."/>
            <person name="Wiebenga A."/>
            <person name="De vries R.P."/>
            <person name="Grigoriev I.V."/>
            <person name="Mortensen U.H."/>
            <person name="Andersen M.R."/>
            <person name="Baker S.E."/>
        </authorList>
    </citation>
    <scope>NUCLEOTIDE SEQUENCE [LARGE SCALE GENOMIC DNA]</scope>
    <source>
        <strain>CBS 115571</strain>
    </source>
</reference>
<dbReference type="EC" id="3.1.1.-" evidence="5"/>
<dbReference type="EMBL" id="BR001648">
    <property type="protein sequence ID" value="FAA01294.1"/>
    <property type="molecule type" value="Genomic_DNA"/>
</dbReference>
<dbReference type="EMBL" id="KZ825234">
    <property type="protein sequence ID" value="PYI13691.1"/>
    <property type="molecule type" value="Genomic_DNA"/>
</dbReference>
<dbReference type="SMR" id="A0A2V5GSC6"/>
<dbReference type="STRING" id="1450538.A0A2V5GSC6"/>
<dbReference type="ESTHER" id="aspv1-pyvd">
    <property type="family name" value="Dienelactone_hydrolase"/>
</dbReference>
<dbReference type="OMA" id="YCYGGKY"/>
<dbReference type="Proteomes" id="UP000249829">
    <property type="component" value="Unassembled WGS sequence"/>
</dbReference>
<dbReference type="GO" id="GO:0016787">
    <property type="term" value="F:hydrolase activity"/>
    <property type="evidence" value="ECO:0007669"/>
    <property type="project" value="UniProtKB-KW"/>
</dbReference>
<dbReference type="Gene3D" id="3.40.50.1820">
    <property type="entry name" value="alpha/beta hydrolase"/>
    <property type="match status" value="1"/>
</dbReference>
<dbReference type="InterPro" id="IPR029058">
    <property type="entry name" value="AB_hydrolase_fold"/>
</dbReference>
<dbReference type="InterPro" id="IPR002925">
    <property type="entry name" value="Dienelactn_hydro"/>
</dbReference>
<dbReference type="PANTHER" id="PTHR17630">
    <property type="entry name" value="DIENELACTONE HYDROLASE"/>
    <property type="match status" value="1"/>
</dbReference>
<dbReference type="PANTHER" id="PTHR17630:SF44">
    <property type="entry name" value="PROTEIN AIM2"/>
    <property type="match status" value="1"/>
</dbReference>
<dbReference type="Pfam" id="PF01738">
    <property type="entry name" value="DLH"/>
    <property type="match status" value="1"/>
</dbReference>
<dbReference type="SUPFAM" id="SSF53474">
    <property type="entry name" value="alpha/beta-Hydrolases"/>
    <property type="match status" value="1"/>
</dbReference>
<sequence>MTSLPPSQCCIGGSLHEGETQGELTKFGDIPVYVSYPPDKSTHNAILFLSDIFGLALVNSKLIADLFAANGYLVVMPDLFQGDPVPVDHSPSFQIMDWLQGHLPPQTDPIVTATLREMRERLGCQRIGGVGYCYGGKYVVRYLHPGQLDVGFVAHPTFIEPDELKAIEGPLSISASAQDNLFPPEKRHESETILAQLDVPYQINIFSDVEHGFAVRCDLNKTRHRFAKEQSFSQGVTWFNQYLKK</sequence>
<feature type="chain" id="PRO_0000452819" description="Hydrolase pyvD">
    <location>
        <begin position="1"/>
        <end position="245"/>
    </location>
</feature>
<feature type="active site" evidence="1">
    <location>
        <position position="133"/>
    </location>
</feature>
<feature type="active site" evidence="1">
    <location>
        <position position="179"/>
    </location>
</feature>
<feature type="active site" evidence="1">
    <location>
        <position position="211"/>
    </location>
</feature>
<comment type="function">
    <text evidence="2 5">Hydrolase; part of the gene cluster that mediates the biosynthesis of pyranoviolin A, a pyranonigrin analog with a C-3 methoxy group (PubMed:33117309). Initially, the PKS portion of pyvA synthesizes C-10 carbon chain from 5 molecules of malonyl-CoA, which is then condensed with the thiolation (T) domain-bound glycine activated by the adenylation (A) domain (PubMed:33117309). The subsequent chain release by Dieckmann condensation (DKC) could be catalyzed by the TE domain present at the C-terminus of pyvA and/or the alpha/beta hydrolase pyvD, installing the tetramic acid moiety (Probable). The FAD-dependent monooxygenase pyvC next epoxidizes one of the olefins of the polyketide part, and the epoxide ring-opening induces the dihydro-gamma-pyrone ring formation (Probable). The cytochrome P450 monooxygeanse pyvB would be responsible for the 2 consecutive reactions, in which the dihydro-gamma-pyrone is oxidized to gamma-pyrone and C-7 is hydroxylated to yield pyranonigrin F (Probable). Finally, the O-methyltransferase pyvH methylates the C-3 hydroxy group to complete the biosynthesis (Probable).</text>
</comment>
<comment type="pathway">
    <text evidence="5">Secondary metabolite biosynthesis.</text>
</comment>
<comment type="similarity">
    <text evidence="4">Belongs to the dienelactone hydrolase family.</text>
</comment>
<name>PYVD_ASPV1</name>
<gene>
    <name evidence="3" type="primary">pyvD</name>
    <name type="ORF">BO99DRAFT_371772</name>
</gene>